<keyword id="KW-0963">Cytoplasm</keyword>
<keyword id="KW-0251">Elongation factor</keyword>
<keyword id="KW-0342">GTP-binding</keyword>
<keyword id="KW-0547">Nucleotide-binding</keyword>
<keyword id="KW-0648">Protein biosynthesis</keyword>
<name>EFG_AERS4</name>
<reference key="1">
    <citation type="journal article" date="2008" name="BMC Genomics">
        <title>The genome of Aeromonas salmonicida subsp. salmonicida A449: insights into the evolution of a fish pathogen.</title>
        <authorList>
            <person name="Reith M.E."/>
            <person name="Singh R.K."/>
            <person name="Curtis B."/>
            <person name="Boyd J.M."/>
            <person name="Bouevitch A."/>
            <person name="Kimball J."/>
            <person name="Munholland J."/>
            <person name="Murphy C."/>
            <person name="Sarty D."/>
            <person name="Williams J."/>
            <person name="Nash J.H."/>
            <person name="Johnson S.C."/>
            <person name="Brown L.L."/>
        </authorList>
    </citation>
    <scope>NUCLEOTIDE SEQUENCE [LARGE SCALE GENOMIC DNA]</scope>
    <source>
        <strain>A449</strain>
    </source>
</reference>
<organism>
    <name type="scientific">Aeromonas salmonicida (strain A449)</name>
    <dbReference type="NCBI Taxonomy" id="382245"/>
    <lineage>
        <taxon>Bacteria</taxon>
        <taxon>Pseudomonadati</taxon>
        <taxon>Pseudomonadota</taxon>
        <taxon>Gammaproteobacteria</taxon>
        <taxon>Aeromonadales</taxon>
        <taxon>Aeromonadaceae</taxon>
        <taxon>Aeromonas</taxon>
    </lineage>
</organism>
<protein>
    <recommendedName>
        <fullName evidence="1">Elongation factor G</fullName>
        <shortName evidence="1">EF-G</shortName>
    </recommendedName>
</protein>
<gene>
    <name evidence="1" type="primary">fusA</name>
    <name type="ordered locus">ASA_0292</name>
</gene>
<sequence length="701" mass="77497">MARTTPIERYRNIGISAHIDAGKTTTTERVLFYTGVSHKIGEVHDGAATMDWMEQEQERGITITSAATTAFWSGMGKQFQPHRINIIDTPGHVDFTIEVERSMRVLDGAVMVYCAVGGVQPQSETVWRQANKYKVPRIAFVNKMDRTGANYLRCVEHIKTRLKGTPVPLQLNIGSEENFKGVIDLVKMKAINWSEADQGVSFDYEEIPAELLEQAQEMRMSLVEAAAEASEDLMEKYLGGEELTEEEIKKALRLRVLNNEIILVTCGSAFKNKGVQAMLDAVVDYLPAPTDVAAIDGLKLDGVTKDERHASDDEPFAALAFKIATDPFVGNLTFFRVYSGVVNSGDSVLNSVKEKRERFGRIVQMHANKREEIKEVRAGDIAAAIGLKDVTTGDTLCDEKSPIILERMEFPEPVISIAVEPKTKADQEKMGLALGRLAQEDPSFRVWTDEESGQTIIAGMGELHLDIIVDRMRREFKVEANVGKPQVAYRETIRETVKDVEGKHAKQSGGRGQYGHVVIDMYPLEAGKAYEFVNDIKGGVIPGEYIPGVDKGIREQLKSGPLAGYPVMDLGVRLHFGSYHDVDSSELAFKIAASMAFKSGYMKANPVLLEPIMKVEVETPEDYMGDVIGDLNRRRGLIEGMEDGPSGKIVRALVPLAEMFGYATALRSATQGRASYAMEFAKYSDAPNNVAQAVIEERKSK</sequence>
<proteinExistence type="inferred from homology"/>
<evidence type="ECO:0000255" key="1">
    <source>
        <dbReference type="HAMAP-Rule" id="MF_00054"/>
    </source>
</evidence>
<evidence type="ECO:0000305" key="2"/>
<accession>A4SHV8</accession>
<comment type="function">
    <text evidence="1">Catalyzes the GTP-dependent ribosomal translocation step during translation elongation. During this step, the ribosome changes from the pre-translocational (PRE) to the post-translocational (POST) state as the newly formed A-site-bound peptidyl-tRNA and P-site-bound deacylated tRNA move to the P and E sites, respectively. Catalyzes the coordinated movement of the two tRNA molecules, the mRNA and conformational changes in the ribosome.</text>
</comment>
<comment type="subcellular location">
    <subcellularLocation>
        <location evidence="1">Cytoplasm</location>
    </subcellularLocation>
</comment>
<comment type="similarity">
    <text evidence="1">Belongs to the TRAFAC class translation factor GTPase superfamily. Classic translation factor GTPase family. EF-G/EF-2 subfamily.</text>
</comment>
<comment type="sequence caution" evidence="2">
    <conflict type="erroneous initiation">
        <sequence resource="EMBL-CDS" id="ABO88480"/>
    </conflict>
</comment>
<dbReference type="EMBL" id="CP000644">
    <property type="protein sequence ID" value="ABO88480.1"/>
    <property type="status" value="ALT_INIT"/>
    <property type="molecule type" value="Genomic_DNA"/>
</dbReference>
<dbReference type="RefSeq" id="WP_005318585.1">
    <property type="nucleotide sequence ID" value="NC_009348.1"/>
</dbReference>
<dbReference type="SMR" id="A4SHV8"/>
<dbReference type="STRING" id="29491.GCA_000820065_03169"/>
<dbReference type="GeneID" id="79881705"/>
<dbReference type="KEGG" id="asa:ASA_0292"/>
<dbReference type="eggNOG" id="COG0480">
    <property type="taxonomic scope" value="Bacteria"/>
</dbReference>
<dbReference type="HOGENOM" id="CLU_002794_4_1_6"/>
<dbReference type="Proteomes" id="UP000000225">
    <property type="component" value="Chromosome"/>
</dbReference>
<dbReference type="GO" id="GO:0005737">
    <property type="term" value="C:cytoplasm"/>
    <property type="evidence" value="ECO:0007669"/>
    <property type="project" value="UniProtKB-SubCell"/>
</dbReference>
<dbReference type="GO" id="GO:0005525">
    <property type="term" value="F:GTP binding"/>
    <property type="evidence" value="ECO:0007669"/>
    <property type="project" value="UniProtKB-UniRule"/>
</dbReference>
<dbReference type="GO" id="GO:0003924">
    <property type="term" value="F:GTPase activity"/>
    <property type="evidence" value="ECO:0007669"/>
    <property type="project" value="InterPro"/>
</dbReference>
<dbReference type="GO" id="GO:0097216">
    <property type="term" value="F:guanosine tetraphosphate binding"/>
    <property type="evidence" value="ECO:0007669"/>
    <property type="project" value="UniProtKB-ARBA"/>
</dbReference>
<dbReference type="GO" id="GO:0003746">
    <property type="term" value="F:translation elongation factor activity"/>
    <property type="evidence" value="ECO:0007669"/>
    <property type="project" value="UniProtKB-UniRule"/>
</dbReference>
<dbReference type="GO" id="GO:0032790">
    <property type="term" value="P:ribosome disassembly"/>
    <property type="evidence" value="ECO:0007669"/>
    <property type="project" value="TreeGrafter"/>
</dbReference>
<dbReference type="CDD" id="cd01886">
    <property type="entry name" value="EF-G"/>
    <property type="match status" value="1"/>
</dbReference>
<dbReference type="CDD" id="cd16262">
    <property type="entry name" value="EFG_III"/>
    <property type="match status" value="1"/>
</dbReference>
<dbReference type="CDD" id="cd01434">
    <property type="entry name" value="EFG_mtEFG1_IV"/>
    <property type="match status" value="1"/>
</dbReference>
<dbReference type="CDD" id="cd03713">
    <property type="entry name" value="EFG_mtEFG_C"/>
    <property type="match status" value="1"/>
</dbReference>
<dbReference type="CDD" id="cd04088">
    <property type="entry name" value="EFG_mtEFG_II"/>
    <property type="match status" value="1"/>
</dbReference>
<dbReference type="FunFam" id="2.40.30.10:FF:000006">
    <property type="entry name" value="Elongation factor G"/>
    <property type="match status" value="1"/>
</dbReference>
<dbReference type="FunFam" id="3.30.230.10:FF:000003">
    <property type="entry name" value="Elongation factor G"/>
    <property type="match status" value="1"/>
</dbReference>
<dbReference type="FunFam" id="3.30.70.240:FF:000001">
    <property type="entry name" value="Elongation factor G"/>
    <property type="match status" value="1"/>
</dbReference>
<dbReference type="FunFam" id="3.30.70.870:FF:000001">
    <property type="entry name" value="Elongation factor G"/>
    <property type="match status" value="1"/>
</dbReference>
<dbReference type="FunFam" id="3.40.50.300:FF:000029">
    <property type="entry name" value="Elongation factor G"/>
    <property type="match status" value="1"/>
</dbReference>
<dbReference type="Gene3D" id="3.30.230.10">
    <property type="match status" value="1"/>
</dbReference>
<dbReference type="Gene3D" id="3.30.70.240">
    <property type="match status" value="1"/>
</dbReference>
<dbReference type="Gene3D" id="3.30.70.870">
    <property type="entry name" value="Elongation Factor G (Translational Gtpase), domain 3"/>
    <property type="match status" value="1"/>
</dbReference>
<dbReference type="Gene3D" id="3.40.50.300">
    <property type="entry name" value="P-loop containing nucleotide triphosphate hydrolases"/>
    <property type="match status" value="1"/>
</dbReference>
<dbReference type="Gene3D" id="2.40.30.10">
    <property type="entry name" value="Translation factors"/>
    <property type="match status" value="1"/>
</dbReference>
<dbReference type="HAMAP" id="MF_00054_B">
    <property type="entry name" value="EF_G_EF_2_B"/>
    <property type="match status" value="1"/>
</dbReference>
<dbReference type="InterPro" id="IPR041095">
    <property type="entry name" value="EFG_II"/>
</dbReference>
<dbReference type="InterPro" id="IPR009022">
    <property type="entry name" value="EFG_III"/>
</dbReference>
<dbReference type="InterPro" id="IPR035647">
    <property type="entry name" value="EFG_III/V"/>
</dbReference>
<dbReference type="InterPro" id="IPR047872">
    <property type="entry name" value="EFG_IV"/>
</dbReference>
<dbReference type="InterPro" id="IPR035649">
    <property type="entry name" value="EFG_V"/>
</dbReference>
<dbReference type="InterPro" id="IPR000640">
    <property type="entry name" value="EFG_V-like"/>
</dbReference>
<dbReference type="InterPro" id="IPR004161">
    <property type="entry name" value="EFTu-like_2"/>
</dbReference>
<dbReference type="InterPro" id="IPR031157">
    <property type="entry name" value="G_TR_CS"/>
</dbReference>
<dbReference type="InterPro" id="IPR027417">
    <property type="entry name" value="P-loop_NTPase"/>
</dbReference>
<dbReference type="InterPro" id="IPR020568">
    <property type="entry name" value="Ribosomal_Su5_D2-typ_SF"/>
</dbReference>
<dbReference type="InterPro" id="IPR014721">
    <property type="entry name" value="Ribsml_uS5_D2-typ_fold_subgr"/>
</dbReference>
<dbReference type="InterPro" id="IPR005225">
    <property type="entry name" value="Small_GTP-bd"/>
</dbReference>
<dbReference type="InterPro" id="IPR000795">
    <property type="entry name" value="T_Tr_GTP-bd_dom"/>
</dbReference>
<dbReference type="InterPro" id="IPR009000">
    <property type="entry name" value="Transl_B-barrel_sf"/>
</dbReference>
<dbReference type="InterPro" id="IPR004540">
    <property type="entry name" value="Transl_elong_EFG/EF2"/>
</dbReference>
<dbReference type="InterPro" id="IPR005517">
    <property type="entry name" value="Transl_elong_EFG/EF2_IV"/>
</dbReference>
<dbReference type="NCBIfam" id="TIGR00484">
    <property type="entry name" value="EF-G"/>
    <property type="match status" value="1"/>
</dbReference>
<dbReference type="NCBIfam" id="NF009381">
    <property type="entry name" value="PRK12740.1-5"/>
    <property type="match status" value="1"/>
</dbReference>
<dbReference type="NCBIfam" id="TIGR00231">
    <property type="entry name" value="small_GTP"/>
    <property type="match status" value="1"/>
</dbReference>
<dbReference type="PANTHER" id="PTHR43261:SF1">
    <property type="entry name" value="RIBOSOME-RELEASING FACTOR 2, MITOCHONDRIAL"/>
    <property type="match status" value="1"/>
</dbReference>
<dbReference type="PANTHER" id="PTHR43261">
    <property type="entry name" value="TRANSLATION ELONGATION FACTOR G-RELATED"/>
    <property type="match status" value="1"/>
</dbReference>
<dbReference type="Pfam" id="PF00679">
    <property type="entry name" value="EFG_C"/>
    <property type="match status" value="1"/>
</dbReference>
<dbReference type="Pfam" id="PF14492">
    <property type="entry name" value="EFG_III"/>
    <property type="match status" value="1"/>
</dbReference>
<dbReference type="Pfam" id="PF03764">
    <property type="entry name" value="EFG_IV"/>
    <property type="match status" value="1"/>
</dbReference>
<dbReference type="Pfam" id="PF00009">
    <property type="entry name" value="GTP_EFTU"/>
    <property type="match status" value="1"/>
</dbReference>
<dbReference type="Pfam" id="PF03144">
    <property type="entry name" value="GTP_EFTU_D2"/>
    <property type="match status" value="1"/>
</dbReference>
<dbReference type="PRINTS" id="PR00315">
    <property type="entry name" value="ELONGATNFCT"/>
</dbReference>
<dbReference type="SMART" id="SM00838">
    <property type="entry name" value="EFG_C"/>
    <property type="match status" value="1"/>
</dbReference>
<dbReference type="SMART" id="SM00889">
    <property type="entry name" value="EFG_IV"/>
    <property type="match status" value="1"/>
</dbReference>
<dbReference type="SUPFAM" id="SSF54980">
    <property type="entry name" value="EF-G C-terminal domain-like"/>
    <property type="match status" value="2"/>
</dbReference>
<dbReference type="SUPFAM" id="SSF52540">
    <property type="entry name" value="P-loop containing nucleoside triphosphate hydrolases"/>
    <property type="match status" value="1"/>
</dbReference>
<dbReference type="SUPFAM" id="SSF54211">
    <property type="entry name" value="Ribosomal protein S5 domain 2-like"/>
    <property type="match status" value="1"/>
</dbReference>
<dbReference type="SUPFAM" id="SSF50447">
    <property type="entry name" value="Translation proteins"/>
    <property type="match status" value="1"/>
</dbReference>
<dbReference type="PROSITE" id="PS00301">
    <property type="entry name" value="G_TR_1"/>
    <property type="match status" value="1"/>
</dbReference>
<dbReference type="PROSITE" id="PS51722">
    <property type="entry name" value="G_TR_2"/>
    <property type="match status" value="1"/>
</dbReference>
<feature type="chain" id="PRO_0000335832" description="Elongation factor G">
    <location>
        <begin position="1"/>
        <end position="701"/>
    </location>
</feature>
<feature type="domain" description="tr-type G">
    <location>
        <begin position="8"/>
        <end position="290"/>
    </location>
</feature>
<feature type="binding site" evidence="1">
    <location>
        <begin position="17"/>
        <end position="24"/>
    </location>
    <ligand>
        <name>GTP</name>
        <dbReference type="ChEBI" id="CHEBI:37565"/>
    </ligand>
</feature>
<feature type="binding site" evidence="1">
    <location>
        <begin position="88"/>
        <end position="92"/>
    </location>
    <ligand>
        <name>GTP</name>
        <dbReference type="ChEBI" id="CHEBI:37565"/>
    </ligand>
</feature>
<feature type="binding site" evidence="1">
    <location>
        <begin position="142"/>
        <end position="145"/>
    </location>
    <ligand>
        <name>GTP</name>
        <dbReference type="ChEBI" id="CHEBI:37565"/>
    </ligand>
</feature>